<dbReference type="EC" id="4.1.2.13" evidence="5 7 8"/>
<dbReference type="EMBL" id="J03084">
    <property type="protein sequence ID" value="AAA29716.1"/>
    <property type="molecule type" value="Genomic_DNA"/>
</dbReference>
<dbReference type="SMR" id="Q27744"/>
<dbReference type="ChEMBL" id="CHEMBL4156"/>
<dbReference type="VEuPathDB" id="PlasmoDB:PF3D7_1444800"/>
<dbReference type="VEuPathDB" id="PlasmoDB:Pf7G8-2_000518600"/>
<dbReference type="VEuPathDB" id="PlasmoDB:Pf7G8_140050000"/>
<dbReference type="VEuPathDB" id="PlasmoDB:PfCD01_140050200"/>
<dbReference type="VEuPathDB" id="PlasmoDB:PfDd2_140049200"/>
<dbReference type="VEuPathDB" id="PlasmoDB:PfGA01_140050300"/>
<dbReference type="VEuPathDB" id="PlasmoDB:PfGB4_140050900"/>
<dbReference type="VEuPathDB" id="PlasmoDB:PfGN01_140050100"/>
<dbReference type="VEuPathDB" id="PlasmoDB:PfHB3_140050500"/>
<dbReference type="VEuPathDB" id="PlasmoDB:PfIT_140051200"/>
<dbReference type="VEuPathDB" id="PlasmoDB:PfKE01_140049700"/>
<dbReference type="VEuPathDB" id="PlasmoDB:PfKH01_140050300"/>
<dbReference type="VEuPathDB" id="PlasmoDB:PfKH02_140050500"/>
<dbReference type="VEuPathDB" id="PlasmoDB:PfML01_140050400"/>
<dbReference type="VEuPathDB" id="PlasmoDB:PfNF135_140048900"/>
<dbReference type="VEuPathDB" id="PlasmoDB:PfNF166_140047700"/>
<dbReference type="VEuPathDB" id="PlasmoDB:PfNF54_140048500"/>
<dbReference type="VEuPathDB" id="PlasmoDB:PfSD01_140048100"/>
<dbReference type="VEuPathDB" id="PlasmoDB:PfSN01_140052000"/>
<dbReference type="VEuPathDB" id="PlasmoDB:PfTG01_140050100"/>
<dbReference type="UniPathway" id="UPA00109">
    <property type="reaction ID" value="UER00183"/>
</dbReference>
<dbReference type="GO" id="GO:0005737">
    <property type="term" value="C:cytoplasm"/>
    <property type="evidence" value="ECO:0007669"/>
    <property type="project" value="UniProtKB-SubCell"/>
</dbReference>
<dbReference type="GO" id="GO:0020002">
    <property type="term" value="C:host cell plasma membrane"/>
    <property type="evidence" value="ECO:0000314"/>
    <property type="project" value="UniProtKB"/>
</dbReference>
<dbReference type="GO" id="GO:0016020">
    <property type="term" value="C:membrane"/>
    <property type="evidence" value="ECO:0007669"/>
    <property type="project" value="UniProtKB-SubCell"/>
</dbReference>
<dbReference type="GO" id="GO:0003779">
    <property type="term" value="F:actin binding"/>
    <property type="evidence" value="ECO:0000314"/>
    <property type="project" value="UniProtKB"/>
</dbReference>
<dbReference type="GO" id="GO:0004332">
    <property type="term" value="F:fructose-bisphosphate aldolase activity"/>
    <property type="evidence" value="ECO:0000314"/>
    <property type="project" value="UniProtKB"/>
</dbReference>
<dbReference type="GO" id="GO:0030388">
    <property type="term" value="P:fructose 1,6-bisphosphate metabolic process"/>
    <property type="evidence" value="ECO:0000314"/>
    <property type="project" value="UniProtKB"/>
</dbReference>
<dbReference type="GO" id="GO:0006096">
    <property type="term" value="P:glycolytic process"/>
    <property type="evidence" value="ECO:0000314"/>
    <property type="project" value="UniProtKB"/>
</dbReference>
<dbReference type="GO" id="GO:0051289">
    <property type="term" value="P:protein homotetramerization"/>
    <property type="evidence" value="ECO:0000314"/>
    <property type="project" value="UniProtKB"/>
</dbReference>
<dbReference type="CDD" id="cd00948">
    <property type="entry name" value="FBP_aldolase_I_a"/>
    <property type="match status" value="1"/>
</dbReference>
<dbReference type="FunFam" id="3.20.20.70:FF:000187">
    <property type="entry name" value="Fructose-bisphosphate aldolase"/>
    <property type="match status" value="1"/>
</dbReference>
<dbReference type="Gene3D" id="3.20.20.70">
    <property type="entry name" value="Aldolase class I"/>
    <property type="match status" value="1"/>
</dbReference>
<dbReference type="InterPro" id="IPR029768">
    <property type="entry name" value="Aldolase_I_AS"/>
</dbReference>
<dbReference type="InterPro" id="IPR013785">
    <property type="entry name" value="Aldolase_TIM"/>
</dbReference>
<dbReference type="InterPro" id="IPR000741">
    <property type="entry name" value="FBA_I"/>
</dbReference>
<dbReference type="NCBIfam" id="NF033379">
    <property type="entry name" value="FrucBisAld_I"/>
    <property type="match status" value="1"/>
</dbReference>
<dbReference type="PANTHER" id="PTHR11627">
    <property type="entry name" value="FRUCTOSE-BISPHOSPHATE ALDOLASE"/>
    <property type="match status" value="1"/>
</dbReference>
<dbReference type="Pfam" id="PF00274">
    <property type="entry name" value="Glycolytic"/>
    <property type="match status" value="1"/>
</dbReference>
<dbReference type="SUPFAM" id="SSF51569">
    <property type="entry name" value="Aldolase"/>
    <property type="match status" value="1"/>
</dbReference>
<dbReference type="PROSITE" id="PS00158">
    <property type="entry name" value="ALDOLASE_CLASS_I"/>
    <property type="match status" value="1"/>
</dbReference>
<reference evidence="11" key="1">
    <citation type="journal article" date="1988" name="Science">
        <title>Aldolase activity of a Plasmodium falciparum protein with protective properties.</title>
        <authorList>
            <person name="Certa U."/>
            <person name="Ghersa P."/>
            <person name="Dobeli H."/>
            <person name="Matile H."/>
            <person name="Kocher H.P."/>
            <person name="Shrivastava I.K."/>
            <person name="Shaw A.R."/>
            <person name="Perrin L.H."/>
        </authorList>
    </citation>
    <scope>NUCLEOTIDE SEQUENCE [GENOMIC DNA]</scope>
    <scope>FUNCTION</scope>
    <scope>CATALYTIC ACTIVITY</scope>
    <scope>PATHWAY</scope>
    <scope>SUBUNIT</scope>
    <scope>BIOTECHNOLOGY</scope>
    <source>
        <strain evidence="11">K1</strain>
    </source>
</reference>
<reference evidence="10" key="2">
    <citation type="journal article" date="1990" name="Mol. Biochem. Parasitol.">
        <title>Expression, purification, biochemical characterization and inhibition of recombinant Plasmodium falciparum aldolase.</title>
        <authorList>
            <person name="Doebeli H."/>
            <person name="Trzeciak A."/>
            <person name="Gillessen D."/>
            <person name="Matile H."/>
            <person name="Srivastava I.K."/>
            <person name="Perrin L.H."/>
            <person name="Jakob P.E."/>
            <person name="Certa U."/>
        </authorList>
    </citation>
    <scope>FUNCTION</scope>
    <scope>CATALYTIC ACTIVITY</scope>
    <scope>ACTIVITY REGULATION</scope>
    <scope>BIOPHYSICOCHEMICAL PROPERTIES</scope>
    <scope>PATHWAY</scope>
    <scope>SUBUNIT</scope>
    <scope>INTERACTION WITH ACT2 AND HUMAN SLC4A1</scope>
    <scope>SUBCELLULAR LOCATION</scope>
    <scope>DEVELOPMENTAL STAGE</scope>
    <scope>BIOTECHNOLOGY</scope>
</reference>
<proteinExistence type="evidence at protein level"/>
<gene>
    <name evidence="10" type="primary">FBPA</name>
    <name evidence="9" type="synonym">p41</name>
</gene>
<sequence length="362" mass="39270">MNAPKKLPADVAEELATTAQKLVQAGKGILAADESTQTIKKRFDNIKLENTIENRASYRDLLFGTKGLGKFISGAILFEETLFQKNEAGVPMVNLLHNENIIPGIKVDKGLVNIPCTDEEKSTQGLDGLAERCKEYYKAGARFAKWRTVLVIDTAKGKPTDLSNHETAWGLARYASICQQNRLVPIVEPEILADGPHSIEVCAVVTQKVLSCVFKALQENGVLLEGALLKPNMVTAGYECTAKTTTQDVGFLTVRTLRRTVPPALPGVVFLSGGQSEEEASVNLNSINALGPHPWALTFSYGRALQASVLNTWQGKKENVAKAREVLLQRAEANSLATYGKYKGGAGGENAGASLYEKKYVY</sequence>
<organism>
    <name type="scientific">Plasmodium falciparum (isolate K1 / Thailand)</name>
    <dbReference type="NCBI Taxonomy" id="5839"/>
    <lineage>
        <taxon>Eukaryota</taxon>
        <taxon>Sar</taxon>
        <taxon>Alveolata</taxon>
        <taxon>Apicomplexa</taxon>
        <taxon>Aconoidasida</taxon>
        <taxon>Haemosporida</taxon>
        <taxon>Plasmodiidae</taxon>
        <taxon>Plasmodium</taxon>
        <taxon>Plasmodium (Laverania)</taxon>
    </lineage>
</organism>
<feature type="chain" id="PRO_0000453627" description="Fructose-bisphosphate aldolase">
    <location>
        <begin position="1"/>
        <end position="362"/>
    </location>
</feature>
<feature type="active site" description="Proton acceptor" evidence="4">
    <location>
        <position position="188"/>
    </location>
</feature>
<feature type="active site" description="Schiff-base intermediate with dihydroxyacetone phosphate" evidence="4">
    <location>
        <position position="230"/>
    </location>
</feature>
<feature type="binding site" evidence="4">
    <location>
        <position position="33"/>
    </location>
    <ligand>
        <name>dihydroxyacetone phosphate</name>
        <dbReference type="ChEBI" id="CHEBI:57642"/>
    </ligand>
</feature>
<feature type="binding site" evidence="4">
    <location>
        <position position="35"/>
    </location>
    <ligand>
        <name>D-glyceraldehyde 3-phosphate</name>
        <dbReference type="ChEBI" id="CHEBI:59776"/>
    </ligand>
</feature>
<feature type="binding site" evidence="4">
    <location>
        <position position="38"/>
    </location>
    <ligand>
        <name>D-glyceraldehyde 3-phosphate</name>
        <dbReference type="ChEBI" id="CHEBI:59776"/>
    </ligand>
</feature>
<feature type="binding site" evidence="1">
    <location>
        <position position="42"/>
    </location>
    <ligand>
        <name>beta-D-fructose 1,6-bisphosphate</name>
        <dbReference type="ChEBI" id="CHEBI:32966"/>
    </ligand>
</feature>
<feature type="binding site" evidence="4">
    <location>
        <position position="106"/>
    </location>
    <ligand>
        <name>D-glyceraldehyde 3-phosphate</name>
        <dbReference type="ChEBI" id="CHEBI:59776"/>
    </ligand>
</feature>
<feature type="binding site" evidence="4">
    <location>
        <position position="145"/>
    </location>
    <ligand>
        <name>dihydroxyacetone phosphate</name>
        <dbReference type="ChEBI" id="CHEBI:57642"/>
    </ligand>
</feature>
<feature type="binding site" evidence="4">
    <location>
        <position position="188"/>
    </location>
    <ligand>
        <name>D-glyceraldehyde 3-phosphate</name>
        <dbReference type="ChEBI" id="CHEBI:59776"/>
    </ligand>
</feature>
<feature type="binding site" evidence="4">
    <location>
        <position position="230"/>
    </location>
    <ligand>
        <name>dihydroxyacetone phosphate</name>
        <dbReference type="ChEBI" id="CHEBI:57642"/>
    </ligand>
</feature>
<feature type="binding site" evidence="1">
    <location>
        <begin position="272"/>
        <end position="274"/>
    </location>
    <ligand>
        <name>beta-D-fructose 1,6-bisphosphate</name>
        <dbReference type="ChEBI" id="CHEBI:32966"/>
    </ligand>
</feature>
<feature type="binding site" evidence="4">
    <location>
        <position position="272"/>
    </location>
    <ligand>
        <name>dihydroxyacetone phosphate</name>
        <dbReference type="ChEBI" id="CHEBI:57642"/>
    </ligand>
</feature>
<feature type="binding site" evidence="4">
    <location>
        <position position="273"/>
    </location>
    <ligand>
        <name>dihydroxyacetone phosphate</name>
        <dbReference type="ChEBI" id="CHEBI:57642"/>
    </ligand>
</feature>
<feature type="binding site" evidence="1">
    <location>
        <position position="300"/>
    </location>
    <ligand>
        <name>beta-D-fructose 1,6-bisphosphate</name>
        <dbReference type="ChEBI" id="CHEBI:32966"/>
    </ligand>
</feature>
<feature type="binding site" evidence="4">
    <location>
        <position position="302"/>
    </location>
    <ligand>
        <name>dihydroxyacetone phosphate</name>
        <dbReference type="ChEBI" id="CHEBI:57642"/>
    </ligand>
</feature>
<feature type="binding site" evidence="1">
    <location>
        <position position="303"/>
    </location>
    <ligand>
        <name>beta-D-fructose 1,6-bisphosphate</name>
        <dbReference type="ChEBI" id="CHEBI:32966"/>
    </ligand>
</feature>
<feature type="binding site" evidence="4">
    <location>
        <position position="303"/>
    </location>
    <ligand>
        <name>dihydroxyacetone phosphate</name>
        <dbReference type="ChEBI" id="CHEBI:57642"/>
    </ligand>
</feature>
<feature type="site" description="Necessary for preference for fructose 1,6-bisphosphate over fructose 1-phosphate" evidence="1">
    <location>
        <position position="362"/>
    </location>
</feature>
<protein>
    <recommendedName>
        <fullName evidence="5">Fructose-bisphosphate aldolase</fullName>
        <ecNumber evidence="5 7 8">4.1.2.13</ecNumber>
    </recommendedName>
</protein>
<name>ALF_PLAFK</name>
<keyword id="KW-0009">Actin-binding</keyword>
<keyword id="KW-0963">Cytoplasm</keyword>
<keyword id="KW-0324">Glycolysis</keyword>
<keyword id="KW-1032">Host cell membrane</keyword>
<keyword id="KW-1043">Host membrane</keyword>
<keyword id="KW-0456">Lyase</keyword>
<keyword id="KW-0472">Membrane</keyword>
<keyword id="KW-0704">Schiff base</keyword>
<comment type="function">
    <text evidence="3 7 8">Plays a key role in glycolysis by catalyzing the cleavage of fructose 1,6-bisphosphate into dihydroxyacetone phosphate and glyceraldehyde 3-phosphate (PubMed:2204832, PubMed:3285469). Independently of its catalytic activity, connects the actin filaments, and thus the actomyosin motor, to cell surface adhesins of the thrombospondin-related anonymous protein (TRAP), the erythrocyte binding ligand (EBL) and reticulocyte binding homolog (RH) protein families; this interaction is probably involved in transducing the motor force across the parasite surface required for sporozoite and ookinete gliding motility and merozoite invasion (By similarity). Stimulates actin polymerisation (By similarity).</text>
</comment>
<comment type="catalytic activity">
    <reaction evidence="5 7 8">
        <text>beta-D-fructose 1,6-bisphosphate = D-glyceraldehyde 3-phosphate + dihydroxyacetone phosphate</text>
        <dbReference type="Rhea" id="RHEA:14729"/>
        <dbReference type="ChEBI" id="CHEBI:32966"/>
        <dbReference type="ChEBI" id="CHEBI:57642"/>
        <dbReference type="ChEBI" id="CHEBI:59776"/>
        <dbReference type="EC" id="4.1.2.13"/>
    </reaction>
</comment>
<comment type="activity regulation">
    <text evidence="3 7">The cytoplasmic tail of TRAP and probably other adhesins acts as a competitive inhibitor as the binding sites of the glycolytic substrate fructose 1,6-bisphosphate and TRAP partially overlap (By similarity). Inhibited by suramin, an antiparasitic drug used to treat Trypanosome-mediated infection (PubMed:2204832).</text>
</comment>
<comment type="biophysicochemical properties">
    <kinetics>
        <KM evidence="7">20 uM for fructose 1,6-bisphosphate (at pH 7.3 and with native protein)</KM>
        <KM evidence="7">25 uM for fructose 1,6-bisphosphate (at pH 7.3 and with recombinant protein)</KM>
        <Vmax evidence="7">4.0 umol/min/mg enzyme (with fructose 1,6-bisphosphate and at pH 7.3)</Vmax>
        <Vmax evidence="7">0.7 umol/min/mg enzyme (with fructose 1-phosphate and at pH 7.3)</Vmax>
    </kinetics>
</comment>
<comment type="pathway">
    <text evidence="6 7 8">Carbohydrate degradation; glycolysis; D-glyceraldehyde 3-phosphate and glycerone phosphate from D-glucose: step 4/4.</text>
</comment>
<comment type="subunit">
    <text evidence="3 7 8">Homotetramer (PubMed:2204832, PubMed:3285469). Interacts with TRAP (via cytoplasmic domain); the interaction prevents substrate binding and thereby inhibits aldolase activity (By similarity). Interacts with MTRAP (via cytoplasmic domain); MTRAP phosphorylation may increase the binding to FBPA (By similarity). Interact with RH1 (via cytoplasmic domain) (By similarity). Interacts with RH2b (via cytoplasmic domain) (By similarity). Interacts with RH4 (via cytoplasmic domain) (By similarity). Interacts with AMA1 (via cytoplasmic domain); the interaction is weak, however it may be increased upon AMA1 phosphorylation (By similarity). Interacts with EBA140 (via cytoplasmic domain); the interaction is weak (By similarity). Interacts with EBA175 (via cytoplasmic domain); the interaction is weak (By similarity). Interacts with EBA181 (via cytoplasmic domain); the interaction is weak (By similarity). Interacts with G-actin and F-actin (By similarity). May interact with ACT2/actin II; the interaction inhibits FBPA catalytic activity (PubMed:2204832). Interacts with human SLC4A1/band 3 (via N-terminus); the interaction inhibits FBPA catalytic activity (PubMed:2204832).</text>
</comment>
<comment type="subcellular location">
    <subcellularLocation>
        <location evidence="2">Cytoplasm</location>
    </subcellularLocation>
    <subcellularLocation>
        <location evidence="2">Membrane</location>
        <topology evidence="10">Peripheral membrane protein</topology>
        <orientation evidence="10">Cytoplasmic side</orientation>
    </subcellularLocation>
    <subcellularLocation>
        <location evidence="7">Host cell membrane</location>
        <topology evidence="10">Peripheral membrane protein</topology>
        <orientation evidence="10">Cytoplasmic side</orientation>
    </subcellularLocation>
</comment>
<comment type="developmental stage">
    <text evidence="7">Expressed during parasite asexual blood stages (at protein level).</text>
</comment>
<comment type="biotechnology">
    <text evidence="7 8">May be an effective malaria vaccine as determined by epitope response in sera (PubMed:3285469). Antibodies against FBPA inhibit its catalytic activity (PubMed:2204832, PubMed:3285469).</text>
</comment>
<comment type="similarity">
    <text evidence="5">Belongs to the class I fructose-bisphosphate aldolase family.</text>
</comment>
<accession>Q27744</accession>
<evidence type="ECO:0000250" key="1">
    <source>
        <dbReference type="UniProtKB" id="P00883"/>
    </source>
</evidence>
<evidence type="ECO:0000250" key="2">
    <source>
        <dbReference type="UniProtKB" id="P14223"/>
    </source>
</evidence>
<evidence type="ECO:0000250" key="3">
    <source>
        <dbReference type="UniProtKB" id="Q7KQL9"/>
    </source>
</evidence>
<evidence type="ECO:0000250" key="4">
    <source>
        <dbReference type="UniProtKB" id="Q8I8I2"/>
    </source>
</evidence>
<evidence type="ECO:0000255" key="5">
    <source>
        <dbReference type="RuleBase" id="RU003994"/>
    </source>
</evidence>
<evidence type="ECO:0000255" key="6">
    <source>
        <dbReference type="RuleBase" id="RU004257"/>
    </source>
</evidence>
<evidence type="ECO:0000269" key="7">
    <source>
    </source>
</evidence>
<evidence type="ECO:0000269" key="8">
    <source>
    </source>
</evidence>
<evidence type="ECO:0000303" key="9">
    <source>
    </source>
</evidence>
<evidence type="ECO:0000305" key="10"/>
<evidence type="ECO:0000312" key="11">
    <source>
        <dbReference type="EMBL" id="AAA29716.1"/>
    </source>
</evidence>